<keyword id="KW-0963">Cytoplasm</keyword>
<keyword id="KW-0408">Iron</keyword>
<keyword id="KW-0411">Iron-sulfur</keyword>
<keyword id="KW-0479">Metal-binding</keyword>
<keyword id="KW-0560">Oxidoreductase</keyword>
<protein>
    <recommendedName>
        <fullName evidence="1">Adenosine 5'-phosphosulfate reductase</fullName>
        <shortName evidence="1">APS reductase</shortName>
        <ecNumber evidence="1">1.8.4.10</ecNumber>
    </recommendedName>
    <alternativeName>
        <fullName evidence="1">5'-adenylylsulfate reductase</fullName>
    </alternativeName>
    <alternativeName>
        <fullName evidence="1">Thioredoxin-dependent 5'-adenylylsulfate reductase</fullName>
    </alternativeName>
</protein>
<reference key="1">
    <citation type="journal article" date="2007" name="Proc. Natl. Acad. Sci. U.S.A.">
        <title>Genome plasticity of BCG and impact on vaccine efficacy.</title>
        <authorList>
            <person name="Brosch R."/>
            <person name="Gordon S.V."/>
            <person name="Garnier T."/>
            <person name="Eiglmeier K."/>
            <person name="Frigui W."/>
            <person name="Valenti P."/>
            <person name="Dos Santos S."/>
            <person name="Duthoy S."/>
            <person name="Lacroix C."/>
            <person name="Garcia-Pelayo C."/>
            <person name="Inwald J.K."/>
            <person name="Golby P."/>
            <person name="Garcia J.N."/>
            <person name="Hewinson R.G."/>
            <person name="Behr M.A."/>
            <person name="Quail M.A."/>
            <person name="Churcher C."/>
            <person name="Barrell B.G."/>
            <person name="Parkhill J."/>
            <person name="Cole S.T."/>
        </authorList>
    </citation>
    <scope>NUCLEOTIDE SEQUENCE [LARGE SCALE GENOMIC DNA]</scope>
    <source>
        <strain>BCG / Pasteur 1173P2</strain>
    </source>
</reference>
<organism>
    <name type="scientific">Mycobacterium bovis (strain BCG / Pasteur 1173P2)</name>
    <dbReference type="NCBI Taxonomy" id="410289"/>
    <lineage>
        <taxon>Bacteria</taxon>
        <taxon>Bacillati</taxon>
        <taxon>Actinomycetota</taxon>
        <taxon>Actinomycetes</taxon>
        <taxon>Mycobacteriales</taxon>
        <taxon>Mycobacteriaceae</taxon>
        <taxon>Mycobacterium</taxon>
        <taxon>Mycobacterium tuberculosis complex</taxon>
    </lineage>
</organism>
<comment type="function">
    <text evidence="1">Catalyzes the formation of sulfite from adenosine 5'-phosphosulfate (APS) using thioredoxin as an electron donor.</text>
</comment>
<comment type="catalytic activity">
    <reaction evidence="1">
        <text>[thioredoxin]-disulfide + sulfite + AMP + 2 H(+) = adenosine 5'-phosphosulfate + [thioredoxin]-dithiol</text>
        <dbReference type="Rhea" id="RHEA:21976"/>
        <dbReference type="Rhea" id="RHEA-COMP:10698"/>
        <dbReference type="Rhea" id="RHEA-COMP:10700"/>
        <dbReference type="ChEBI" id="CHEBI:15378"/>
        <dbReference type="ChEBI" id="CHEBI:17359"/>
        <dbReference type="ChEBI" id="CHEBI:29950"/>
        <dbReference type="ChEBI" id="CHEBI:50058"/>
        <dbReference type="ChEBI" id="CHEBI:58243"/>
        <dbReference type="ChEBI" id="CHEBI:456215"/>
        <dbReference type="EC" id="1.8.4.10"/>
    </reaction>
</comment>
<comment type="cofactor">
    <cofactor evidence="1">
        <name>[4Fe-4S] cluster</name>
        <dbReference type="ChEBI" id="CHEBI:49883"/>
    </cofactor>
    <text evidence="1">Binds 1 [4Fe-4S] cluster per subunit.</text>
</comment>
<comment type="pathway">
    <text evidence="1">Sulfur metabolism; hydrogen sulfide biosynthesis; sulfite from sulfate.</text>
</comment>
<comment type="subcellular location">
    <subcellularLocation>
        <location evidence="1">Cytoplasm</location>
    </subcellularLocation>
</comment>
<comment type="similarity">
    <text evidence="1">Belongs to the PAPS reductase family. CysH subfamily.</text>
</comment>
<evidence type="ECO:0000255" key="1">
    <source>
        <dbReference type="HAMAP-Rule" id="MF_00063"/>
    </source>
</evidence>
<accession>A1KL82</accession>
<feature type="chain" id="PRO_1000008929" description="Adenosine 5'-phosphosulfate reductase">
    <location>
        <begin position="1"/>
        <end position="254"/>
    </location>
</feature>
<feature type="active site" description="Nucleophile; cysteine thiosulfonate intermediate" evidence="1">
    <location>
        <position position="249"/>
    </location>
</feature>
<feature type="binding site" evidence="1">
    <location>
        <position position="140"/>
    </location>
    <ligand>
        <name>[4Fe-4S] cluster</name>
        <dbReference type="ChEBI" id="CHEBI:49883"/>
    </ligand>
</feature>
<feature type="binding site" evidence="1">
    <location>
        <position position="141"/>
    </location>
    <ligand>
        <name>[4Fe-4S] cluster</name>
        <dbReference type="ChEBI" id="CHEBI:49883"/>
    </ligand>
</feature>
<feature type="binding site" evidence="1">
    <location>
        <position position="223"/>
    </location>
    <ligand>
        <name>[4Fe-4S] cluster</name>
        <dbReference type="ChEBI" id="CHEBI:49883"/>
    </ligand>
</feature>
<feature type="binding site" evidence="1">
    <location>
        <position position="226"/>
    </location>
    <ligand>
        <name>[4Fe-4S] cluster</name>
        <dbReference type="ChEBI" id="CHEBI:49883"/>
    </ligand>
</feature>
<sequence length="254" mass="27423">MSGETTRLTEPQLRELAARGAAELDGATATDMLRWTDETFGDIGGAGGGVSGHRGWTTCNYVVASNMADAVLVDLAAKVRPGVPVIFLDTGYHFVETIGTRDAIESVYDVRVLNVTPEHTVAEQDELLGKDLFARNPHECCRLRKVVPLGKTLRGYSAWVTGLRRVDAPTRANAPLVSFDETFKLVKVNPLAAWTDQDVQEYIADNDVLVNPLVREGYPSIGCAPCTAKPAEGADPRSGRWQGLAKTECGLHAS</sequence>
<gene>
    <name evidence="1" type="primary">cysH</name>
    <name type="ordered locus">BCG_2406</name>
</gene>
<name>CYSH_MYCBP</name>
<proteinExistence type="inferred from homology"/>
<dbReference type="EC" id="1.8.4.10" evidence="1"/>
<dbReference type="EMBL" id="AM408590">
    <property type="protein sequence ID" value="CAL72394.1"/>
    <property type="molecule type" value="Genomic_DNA"/>
</dbReference>
<dbReference type="RefSeq" id="WP_003412303.1">
    <property type="nucleotide sequence ID" value="NC_008769.1"/>
</dbReference>
<dbReference type="SMR" id="A1KL82"/>
<dbReference type="KEGG" id="mbb:BCG_2406"/>
<dbReference type="HOGENOM" id="CLU_044089_2_0_11"/>
<dbReference type="Proteomes" id="UP000001472">
    <property type="component" value="Chromosome"/>
</dbReference>
<dbReference type="GO" id="GO:0005737">
    <property type="term" value="C:cytoplasm"/>
    <property type="evidence" value="ECO:0007669"/>
    <property type="project" value="UniProtKB-SubCell"/>
</dbReference>
<dbReference type="GO" id="GO:0051539">
    <property type="term" value="F:4 iron, 4 sulfur cluster binding"/>
    <property type="evidence" value="ECO:0007669"/>
    <property type="project" value="UniProtKB-UniRule"/>
</dbReference>
<dbReference type="GO" id="GO:0043866">
    <property type="term" value="F:adenylyl-sulfate reductase (thioredoxin) activity"/>
    <property type="evidence" value="ECO:0007669"/>
    <property type="project" value="UniProtKB-EC"/>
</dbReference>
<dbReference type="GO" id="GO:0046872">
    <property type="term" value="F:metal ion binding"/>
    <property type="evidence" value="ECO:0007669"/>
    <property type="project" value="UniProtKB-KW"/>
</dbReference>
<dbReference type="GO" id="GO:0004604">
    <property type="term" value="F:phosphoadenylyl-sulfate reductase (thioredoxin) activity"/>
    <property type="evidence" value="ECO:0007669"/>
    <property type="project" value="UniProtKB-UniRule"/>
</dbReference>
<dbReference type="GO" id="GO:0019344">
    <property type="term" value="P:cysteine biosynthetic process"/>
    <property type="evidence" value="ECO:0007669"/>
    <property type="project" value="InterPro"/>
</dbReference>
<dbReference type="GO" id="GO:0070814">
    <property type="term" value="P:hydrogen sulfide biosynthetic process"/>
    <property type="evidence" value="ECO:0007669"/>
    <property type="project" value="UniProtKB-UniRule"/>
</dbReference>
<dbReference type="GO" id="GO:0019379">
    <property type="term" value="P:sulfate assimilation, phosphoadenylyl sulfate reduction by phosphoadenylyl-sulfate reductase (thioredoxin)"/>
    <property type="evidence" value="ECO:0007669"/>
    <property type="project" value="UniProtKB-UniRule"/>
</dbReference>
<dbReference type="CDD" id="cd23945">
    <property type="entry name" value="PAPS_reductase"/>
    <property type="match status" value="1"/>
</dbReference>
<dbReference type="FunFam" id="3.40.50.620:FF:000136">
    <property type="entry name" value="Probable phosphoadenosine phosphosulfate reductase"/>
    <property type="match status" value="1"/>
</dbReference>
<dbReference type="Gene3D" id="3.40.50.620">
    <property type="entry name" value="HUPs"/>
    <property type="match status" value="1"/>
</dbReference>
<dbReference type="HAMAP" id="MF_00063">
    <property type="entry name" value="CysH"/>
    <property type="match status" value="1"/>
</dbReference>
<dbReference type="InterPro" id="IPR011798">
    <property type="entry name" value="APS_reductase"/>
</dbReference>
<dbReference type="InterPro" id="IPR004511">
    <property type="entry name" value="PAPS/APS_Rdtase"/>
</dbReference>
<dbReference type="InterPro" id="IPR002500">
    <property type="entry name" value="PAPS_reduct_dom"/>
</dbReference>
<dbReference type="InterPro" id="IPR014729">
    <property type="entry name" value="Rossmann-like_a/b/a_fold"/>
</dbReference>
<dbReference type="NCBIfam" id="TIGR02055">
    <property type="entry name" value="APS_reductase"/>
    <property type="match status" value="1"/>
</dbReference>
<dbReference type="NCBIfam" id="TIGR00434">
    <property type="entry name" value="cysH"/>
    <property type="match status" value="1"/>
</dbReference>
<dbReference type="NCBIfam" id="NF002537">
    <property type="entry name" value="PRK02090.1"/>
    <property type="match status" value="1"/>
</dbReference>
<dbReference type="PANTHER" id="PTHR46509">
    <property type="entry name" value="PHOSPHOADENOSINE PHOSPHOSULFATE REDUCTASE"/>
    <property type="match status" value="1"/>
</dbReference>
<dbReference type="PANTHER" id="PTHR46509:SF1">
    <property type="entry name" value="PHOSPHOADENOSINE PHOSPHOSULFATE REDUCTASE"/>
    <property type="match status" value="1"/>
</dbReference>
<dbReference type="Pfam" id="PF01507">
    <property type="entry name" value="PAPS_reduct"/>
    <property type="match status" value="1"/>
</dbReference>
<dbReference type="PIRSF" id="PIRSF000857">
    <property type="entry name" value="PAPS_reductase"/>
    <property type="match status" value="1"/>
</dbReference>
<dbReference type="SUPFAM" id="SSF52402">
    <property type="entry name" value="Adenine nucleotide alpha hydrolases-like"/>
    <property type="match status" value="1"/>
</dbReference>